<sequence>MASIRELHEQLVKKERSAVEITQETLDHIQELEPKLHSFLHITAQQALEQARAVDAKIAAGEEIGLLAGIPIGVKDNMCTKGIPTTCASRILENFVPPYESTVTQKLLDAGAVVVGKTNLDEFAMGSSTENSAYQVTANPWDLSRVPGGSSGGSAAAVAAEECVVALGSDTGGSIRQPASFCGVVGLKPTYGLVSRYGLVAYASSLDQIGPFGKSVEDTAILLKAIAGYDHQDSTSLKVEIPDYVASLKPDLKARSKLRIGIIKETFGEGLDSVVEQAVTKAIEQLQRLGAEVHVISCPNFRYGVPSYYIIAPSEASANLARYDGVKYGWRAPEGDNLLSMYKRTRATGFGAEVKRRIMIGTYALSAGYYDAYYLKAQKVRTLIKQDFENAFKNVDVLVSPTAPTTAFKAGEKTADPISMYLNDLMTIPVNLAGLPGLSVPCGFDEQGLPIGLQLIGKVLREDQLLQIAYAYEQSTSWHLSQPKIS</sequence>
<evidence type="ECO:0000255" key="1">
    <source>
        <dbReference type="HAMAP-Rule" id="MF_00120"/>
    </source>
</evidence>
<protein>
    <recommendedName>
        <fullName evidence="1">Glutamyl-tRNA(Gln) amidotransferase subunit A</fullName>
        <shortName evidence="1">Glu-ADT subunit A</shortName>
        <ecNumber evidence="1">6.3.5.7</ecNumber>
    </recommendedName>
</protein>
<feature type="chain" id="PRO_0000105132" description="Glutamyl-tRNA(Gln) amidotransferase subunit A">
    <location>
        <begin position="1"/>
        <end position="486"/>
    </location>
</feature>
<feature type="active site" description="Charge relay system" evidence="1">
    <location>
        <position position="75"/>
    </location>
</feature>
<feature type="active site" description="Charge relay system" evidence="1">
    <location>
        <position position="150"/>
    </location>
</feature>
<feature type="active site" description="Acyl-ester intermediate" evidence="1">
    <location>
        <position position="174"/>
    </location>
</feature>
<dbReference type="EC" id="6.3.5.7" evidence="1"/>
<dbReference type="EMBL" id="BA000019">
    <property type="protein sequence ID" value="BAB73010.1"/>
    <property type="molecule type" value="Genomic_DNA"/>
</dbReference>
<dbReference type="PIR" id="AB1938">
    <property type="entry name" value="AB1938"/>
</dbReference>
<dbReference type="RefSeq" id="WP_010995227.1">
    <property type="nucleotide sequence ID" value="NZ_RSCN01000008.1"/>
</dbReference>
<dbReference type="SMR" id="Q8YY02"/>
<dbReference type="STRING" id="103690.gene:10493067"/>
<dbReference type="KEGG" id="ana:all1053"/>
<dbReference type="eggNOG" id="COG0154">
    <property type="taxonomic scope" value="Bacteria"/>
</dbReference>
<dbReference type="OrthoDB" id="9811471at2"/>
<dbReference type="Proteomes" id="UP000002483">
    <property type="component" value="Chromosome"/>
</dbReference>
<dbReference type="GO" id="GO:0030956">
    <property type="term" value="C:glutamyl-tRNA(Gln) amidotransferase complex"/>
    <property type="evidence" value="ECO:0007669"/>
    <property type="project" value="InterPro"/>
</dbReference>
<dbReference type="GO" id="GO:0005524">
    <property type="term" value="F:ATP binding"/>
    <property type="evidence" value="ECO:0007669"/>
    <property type="project" value="UniProtKB-KW"/>
</dbReference>
<dbReference type="GO" id="GO:0050567">
    <property type="term" value="F:glutaminyl-tRNA synthase (glutamine-hydrolyzing) activity"/>
    <property type="evidence" value="ECO:0007669"/>
    <property type="project" value="UniProtKB-UniRule"/>
</dbReference>
<dbReference type="GO" id="GO:0006412">
    <property type="term" value="P:translation"/>
    <property type="evidence" value="ECO:0007669"/>
    <property type="project" value="UniProtKB-UniRule"/>
</dbReference>
<dbReference type="Gene3D" id="3.90.1300.10">
    <property type="entry name" value="Amidase signature (AS) domain"/>
    <property type="match status" value="1"/>
</dbReference>
<dbReference type="HAMAP" id="MF_00120">
    <property type="entry name" value="GatA"/>
    <property type="match status" value="1"/>
</dbReference>
<dbReference type="InterPro" id="IPR000120">
    <property type="entry name" value="Amidase"/>
</dbReference>
<dbReference type="InterPro" id="IPR020556">
    <property type="entry name" value="Amidase_CS"/>
</dbReference>
<dbReference type="InterPro" id="IPR023631">
    <property type="entry name" value="Amidase_dom"/>
</dbReference>
<dbReference type="InterPro" id="IPR036928">
    <property type="entry name" value="AS_sf"/>
</dbReference>
<dbReference type="InterPro" id="IPR004412">
    <property type="entry name" value="GatA"/>
</dbReference>
<dbReference type="NCBIfam" id="TIGR00132">
    <property type="entry name" value="gatA"/>
    <property type="match status" value="1"/>
</dbReference>
<dbReference type="PANTHER" id="PTHR11895:SF151">
    <property type="entry name" value="GLUTAMYL-TRNA(GLN) AMIDOTRANSFERASE SUBUNIT A"/>
    <property type="match status" value="1"/>
</dbReference>
<dbReference type="PANTHER" id="PTHR11895">
    <property type="entry name" value="TRANSAMIDASE"/>
    <property type="match status" value="1"/>
</dbReference>
<dbReference type="Pfam" id="PF01425">
    <property type="entry name" value="Amidase"/>
    <property type="match status" value="1"/>
</dbReference>
<dbReference type="SUPFAM" id="SSF75304">
    <property type="entry name" value="Amidase signature (AS) enzymes"/>
    <property type="match status" value="1"/>
</dbReference>
<dbReference type="PROSITE" id="PS00571">
    <property type="entry name" value="AMIDASES"/>
    <property type="match status" value="1"/>
</dbReference>
<gene>
    <name evidence="1" type="primary">gatA</name>
    <name type="ordered locus">all1053</name>
</gene>
<reference key="1">
    <citation type="journal article" date="2001" name="DNA Res.">
        <title>Complete genomic sequence of the filamentous nitrogen-fixing cyanobacterium Anabaena sp. strain PCC 7120.</title>
        <authorList>
            <person name="Kaneko T."/>
            <person name="Nakamura Y."/>
            <person name="Wolk C.P."/>
            <person name="Kuritz T."/>
            <person name="Sasamoto S."/>
            <person name="Watanabe A."/>
            <person name="Iriguchi M."/>
            <person name="Ishikawa A."/>
            <person name="Kawashima K."/>
            <person name="Kimura T."/>
            <person name="Kishida Y."/>
            <person name="Kohara M."/>
            <person name="Matsumoto M."/>
            <person name="Matsuno A."/>
            <person name="Muraki A."/>
            <person name="Nakazaki N."/>
            <person name="Shimpo S."/>
            <person name="Sugimoto M."/>
            <person name="Takazawa M."/>
            <person name="Yamada M."/>
            <person name="Yasuda M."/>
            <person name="Tabata S."/>
        </authorList>
    </citation>
    <scope>NUCLEOTIDE SEQUENCE [LARGE SCALE GENOMIC DNA]</scope>
    <source>
        <strain>PCC 7120 / SAG 25.82 / UTEX 2576</strain>
    </source>
</reference>
<organism>
    <name type="scientific">Nostoc sp. (strain PCC 7120 / SAG 25.82 / UTEX 2576)</name>
    <dbReference type="NCBI Taxonomy" id="103690"/>
    <lineage>
        <taxon>Bacteria</taxon>
        <taxon>Bacillati</taxon>
        <taxon>Cyanobacteriota</taxon>
        <taxon>Cyanophyceae</taxon>
        <taxon>Nostocales</taxon>
        <taxon>Nostocaceae</taxon>
        <taxon>Nostoc</taxon>
    </lineage>
</organism>
<proteinExistence type="inferred from homology"/>
<keyword id="KW-0067">ATP-binding</keyword>
<keyword id="KW-0436">Ligase</keyword>
<keyword id="KW-0547">Nucleotide-binding</keyword>
<keyword id="KW-0648">Protein biosynthesis</keyword>
<keyword id="KW-1185">Reference proteome</keyword>
<name>GATA_NOSS1</name>
<comment type="function">
    <text evidence="1">Allows the formation of correctly charged Gln-tRNA(Gln) through the transamidation of misacylated Glu-tRNA(Gln) in organisms which lack glutaminyl-tRNA synthetase. The reaction takes place in the presence of glutamine and ATP through an activated gamma-phospho-Glu-tRNA(Gln).</text>
</comment>
<comment type="catalytic activity">
    <reaction evidence="1">
        <text>L-glutamyl-tRNA(Gln) + L-glutamine + ATP + H2O = L-glutaminyl-tRNA(Gln) + L-glutamate + ADP + phosphate + H(+)</text>
        <dbReference type="Rhea" id="RHEA:17521"/>
        <dbReference type="Rhea" id="RHEA-COMP:9681"/>
        <dbReference type="Rhea" id="RHEA-COMP:9684"/>
        <dbReference type="ChEBI" id="CHEBI:15377"/>
        <dbReference type="ChEBI" id="CHEBI:15378"/>
        <dbReference type="ChEBI" id="CHEBI:29985"/>
        <dbReference type="ChEBI" id="CHEBI:30616"/>
        <dbReference type="ChEBI" id="CHEBI:43474"/>
        <dbReference type="ChEBI" id="CHEBI:58359"/>
        <dbReference type="ChEBI" id="CHEBI:78520"/>
        <dbReference type="ChEBI" id="CHEBI:78521"/>
        <dbReference type="ChEBI" id="CHEBI:456216"/>
        <dbReference type="EC" id="6.3.5.7"/>
    </reaction>
</comment>
<comment type="subunit">
    <text evidence="1">Heterotrimer of A, B and C subunits.</text>
</comment>
<comment type="similarity">
    <text evidence="1">Belongs to the amidase family. GatA subfamily.</text>
</comment>
<accession>Q8YY02</accession>